<sequence length="276" mass="30124">MALKHFNPVTASLRGTVLVDRSELWKGKPVKTLTEGKHSTGGRNNHGRITSRFRGGGHKQTYRYVDFKRRKADVPATVERLEYDPNRTAFIALIKYQDGELSYILAPQRLKAGDVVVSGARADIKPGNAMPLGAIPVGTIIHNIEMKPGAGGKIARSAGTYAQLVGKDAGYAQIKLMSGELRVVRAECYATVGAVSNPDNSNIHIGKAGRSRWLGRRPHNRGVVMNPVDHPHGGGEGRTSGGRHPVTPWGKPTKGYKTRTNKRTDSLIIRRRNKGK</sequence>
<keyword id="KW-1185">Reference proteome</keyword>
<keyword id="KW-0687">Ribonucleoprotein</keyword>
<keyword id="KW-0689">Ribosomal protein</keyword>
<keyword id="KW-0694">RNA-binding</keyword>
<keyword id="KW-0699">rRNA-binding</keyword>
<evidence type="ECO:0000255" key="1">
    <source>
        <dbReference type="HAMAP-Rule" id="MF_01320"/>
    </source>
</evidence>
<evidence type="ECO:0000256" key="2">
    <source>
        <dbReference type="SAM" id="MobiDB-lite"/>
    </source>
</evidence>
<evidence type="ECO:0000305" key="3"/>
<organism>
    <name type="scientific">Granulibacter bethesdensis (strain ATCC BAA-1260 / CGDNIH1)</name>
    <dbReference type="NCBI Taxonomy" id="391165"/>
    <lineage>
        <taxon>Bacteria</taxon>
        <taxon>Pseudomonadati</taxon>
        <taxon>Pseudomonadota</taxon>
        <taxon>Alphaproteobacteria</taxon>
        <taxon>Acetobacterales</taxon>
        <taxon>Acetobacteraceae</taxon>
        <taxon>Granulibacter</taxon>
    </lineage>
</organism>
<protein>
    <recommendedName>
        <fullName evidence="1">Large ribosomal subunit protein uL2</fullName>
    </recommendedName>
    <alternativeName>
        <fullName evidence="3">50S ribosomal protein L2</fullName>
    </alternativeName>
</protein>
<name>RL2_GRABC</name>
<feature type="chain" id="PRO_0000309925" description="Large ribosomal subunit protein uL2">
    <location>
        <begin position="1"/>
        <end position="276"/>
    </location>
</feature>
<feature type="region of interest" description="Disordered" evidence="2">
    <location>
        <begin position="213"/>
        <end position="264"/>
    </location>
</feature>
<comment type="function">
    <text evidence="1">One of the primary rRNA binding proteins. Required for association of the 30S and 50S subunits to form the 70S ribosome, for tRNA binding and peptide bond formation. It has been suggested to have peptidyltransferase activity; this is somewhat controversial. Makes several contacts with the 16S rRNA in the 70S ribosome.</text>
</comment>
<comment type="subunit">
    <text evidence="1">Part of the 50S ribosomal subunit. Forms a bridge to the 30S subunit in the 70S ribosome.</text>
</comment>
<comment type="similarity">
    <text evidence="1">Belongs to the universal ribosomal protein uL2 family.</text>
</comment>
<comment type="sequence caution" evidence="3">
    <conflict type="erroneous initiation">
        <sequence resource="EMBL-CDS" id="ABI61455"/>
    </conflict>
</comment>
<dbReference type="EMBL" id="CP000394">
    <property type="protein sequence ID" value="ABI61455.1"/>
    <property type="status" value="ALT_INIT"/>
    <property type="molecule type" value="Genomic_DNA"/>
</dbReference>
<dbReference type="RefSeq" id="WP_011631264.1">
    <property type="nucleotide sequence ID" value="NC_008343.2"/>
</dbReference>
<dbReference type="SMR" id="Q0BUP7"/>
<dbReference type="STRING" id="391165.GbCGDNIH1_0557"/>
<dbReference type="GeneID" id="69744810"/>
<dbReference type="KEGG" id="gbe:GbCGDNIH1_0557"/>
<dbReference type="eggNOG" id="COG0090">
    <property type="taxonomic scope" value="Bacteria"/>
</dbReference>
<dbReference type="HOGENOM" id="CLU_036235_2_1_5"/>
<dbReference type="OrthoDB" id="9778722at2"/>
<dbReference type="Proteomes" id="UP000001963">
    <property type="component" value="Chromosome"/>
</dbReference>
<dbReference type="GO" id="GO:0015934">
    <property type="term" value="C:large ribosomal subunit"/>
    <property type="evidence" value="ECO:0007669"/>
    <property type="project" value="InterPro"/>
</dbReference>
<dbReference type="GO" id="GO:0019843">
    <property type="term" value="F:rRNA binding"/>
    <property type="evidence" value="ECO:0007669"/>
    <property type="project" value="UniProtKB-UniRule"/>
</dbReference>
<dbReference type="GO" id="GO:0003735">
    <property type="term" value="F:structural constituent of ribosome"/>
    <property type="evidence" value="ECO:0007669"/>
    <property type="project" value="InterPro"/>
</dbReference>
<dbReference type="GO" id="GO:0016740">
    <property type="term" value="F:transferase activity"/>
    <property type="evidence" value="ECO:0007669"/>
    <property type="project" value="InterPro"/>
</dbReference>
<dbReference type="GO" id="GO:0002181">
    <property type="term" value="P:cytoplasmic translation"/>
    <property type="evidence" value="ECO:0007669"/>
    <property type="project" value="TreeGrafter"/>
</dbReference>
<dbReference type="FunFam" id="2.30.30.30:FF:000001">
    <property type="entry name" value="50S ribosomal protein L2"/>
    <property type="match status" value="1"/>
</dbReference>
<dbReference type="FunFam" id="2.40.50.140:FF:000003">
    <property type="entry name" value="50S ribosomal protein L2"/>
    <property type="match status" value="1"/>
</dbReference>
<dbReference type="FunFam" id="4.10.950.10:FF:000001">
    <property type="entry name" value="50S ribosomal protein L2"/>
    <property type="match status" value="1"/>
</dbReference>
<dbReference type="Gene3D" id="2.30.30.30">
    <property type="match status" value="1"/>
</dbReference>
<dbReference type="Gene3D" id="2.40.50.140">
    <property type="entry name" value="Nucleic acid-binding proteins"/>
    <property type="match status" value="1"/>
</dbReference>
<dbReference type="Gene3D" id="4.10.950.10">
    <property type="entry name" value="Ribosomal protein L2, domain 3"/>
    <property type="match status" value="1"/>
</dbReference>
<dbReference type="HAMAP" id="MF_01320_B">
    <property type="entry name" value="Ribosomal_uL2_B"/>
    <property type="match status" value="1"/>
</dbReference>
<dbReference type="InterPro" id="IPR012340">
    <property type="entry name" value="NA-bd_OB-fold"/>
</dbReference>
<dbReference type="InterPro" id="IPR014722">
    <property type="entry name" value="Rib_uL2_dom2"/>
</dbReference>
<dbReference type="InterPro" id="IPR002171">
    <property type="entry name" value="Ribosomal_uL2"/>
</dbReference>
<dbReference type="InterPro" id="IPR005880">
    <property type="entry name" value="Ribosomal_uL2_bac/org-type"/>
</dbReference>
<dbReference type="InterPro" id="IPR022669">
    <property type="entry name" value="Ribosomal_uL2_C"/>
</dbReference>
<dbReference type="InterPro" id="IPR022671">
    <property type="entry name" value="Ribosomal_uL2_CS"/>
</dbReference>
<dbReference type="InterPro" id="IPR014726">
    <property type="entry name" value="Ribosomal_uL2_dom3"/>
</dbReference>
<dbReference type="InterPro" id="IPR022666">
    <property type="entry name" value="Ribosomal_uL2_RNA-bd_dom"/>
</dbReference>
<dbReference type="InterPro" id="IPR008991">
    <property type="entry name" value="Translation_prot_SH3-like_sf"/>
</dbReference>
<dbReference type="NCBIfam" id="TIGR01171">
    <property type="entry name" value="rplB_bact"/>
    <property type="match status" value="1"/>
</dbReference>
<dbReference type="PANTHER" id="PTHR13691:SF5">
    <property type="entry name" value="LARGE RIBOSOMAL SUBUNIT PROTEIN UL2M"/>
    <property type="match status" value="1"/>
</dbReference>
<dbReference type="PANTHER" id="PTHR13691">
    <property type="entry name" value="RIBOSOMAL PROTEIN L2"/>
    <property type="match status" value="1"/>
</dbReference>
<dbReference type="Pfam" id="PF00181">
    <property type="entry name" value="Ribosomal_L2"/>
    <property type="match status" value="1"/>
</dbReference>
<dbReference type="Pfam" id="PF03947">
    <property type="entry name" value="Ribosomal_L2_C"/>
    <property type="match status" value="1"/>
</dbReference>
<dbReference type="PIRSF" id="PIRSF002158">
    <property type="entry name" value="Ribosomal_L2"/>
    <property type="match status" value="1"/>
</dbReference>
<dbReference type="SMART" id="SM01383">
    <property type="entry name" value="Ribosomal_L2"/>
    <property type="match status" value="1"/>
</dbReference>
<dbReference type="SMART" id="SM01382">
    <property type="entry name" value="Ribosomal_L2_C"/>
    <property type="match status" value="1"/>
</dbReference>
<dbReference type="SUPFAM" id="SSF50249">
    <property type="entry name" value="Nucleic acid-binding proteins"/>
    <property type="match status" value="1"/>
</dbReference>
<dbReference type="SUPFAM" id="SSF50104">
    <property type="entry name" value="Translation proteins SH3-like domain"/>
    <property type="match status" value="1"/>
</dbReference>
<dbReference type="PROSITE" id="PS00467">
    <property type="entry name" value="RIBOSOMAL_L2"/>
    <property type="match status" value="1"/>
</dbReference>
<reference key="1">
    <citation type="journal article" date="2007" name="J. Bacteriol.">
        <title>Genome sequence analysis of the emerging human pathogenic acetic acid bacterium Granulibacter bethesdensis.</title>
        <authorList>
            <person name="Greenberg D.E."/>
            <person name="Porcella S.F."/>
            <person name="Zelazny A.M."/>
            <person name="Virtaneva K."/>
            <person name="Sturdevant D.E."/>
            <person name="Kupko J.J. III"/>
            <person name="Barbian K.D."/>
            <person name="Babar A."/>
            <person name="Dorward D.W."/>
            <person name="Holland S.M."/>
        </authorList>
    </citation>
    <scope>NUCLEOTIDE SEQUENCE [LARGE SCALE GENOMIC DNA]</scope>
    <source>
        <strain>ATCC BAA-1260 / CGDNIH1</strain>
    </source>
</reference>
<gene>
    <name evidence="1" type="primary">rplB</name>
    <name type="ordered locus">GbCGDNIH1_0557</name>
</gene>
<proteinExistence type="inferred from homology"/>
<accession>Q0BUP7</accession>